<keyword id="KW-0687">Ribonucleoprotein</keyword>
<keyword id="KW-0689">Ribosomal protein</keyword>
<keyword id="KW-0694">RNA-binding</keyword>
<keyword id="KW-0699">rRNA-binding</keyword>
<gene>
    <name evidence="1" type="primary">rpsO</name>
    <name type="ordered locus">MHP7448_0103</name>
</gene>
<protein>
    <recommendedName>
        <fullName evidence="1">Small ribosomal subunit protein uS15</fullName>
    </recommendedName>
    <alternativeName>
        <fullName evidence="2">30S ribosomal protein S15</fullName>
    </alternativeName>
</protein>
<feature type="chain" id="PRO_0000115478" description="Small ribosomal subunit protein uS15">
    <location>
        <begin position="1"/>
        <end position="88"/>
    </location>
</feature>
<sequence length="88" mass="10372">MISKARKQEIILKFGKNPKNTGNTSVQIALLTEDIERLKLHFLKNKKDKHSMRGFIAKVNKRKKLLNYLRINSFDTYKETIEALNIRK</sequence>
<accession>Q4A8Q9</accession>
<name>RS15_MESH7</name>
<proteinExistence type="inferred from homology"/>
<evidence type="ECO:0000255" key="1">
    <source>
        <dbReference type="HAMAP-Rule" id="MF_01343"/>
    </source>
</evidence>
<evidence type="ECO:0000305" key="2"/>
<comment type="function">
    <text evidence="1">One of the primary rRNA binding proteins, it binds directly to 16S rRNA where it helps nucleate assembly of the platform of the 30S subunit by binding and bridging several RNA helices of the 16S rRNA.</text>
</comment>
<comment type="function">
    <text evidence="1">Forms an intersubunit bridge (bridge B4) with the 23S rRNA of the 50S subunit in the ribosome.</text>
</comment>
<comment type="subunit">
    <text evidence="1">Part of the 30S ribosomal subunit. Forms a bridge to the 50S subunit in the 70S ribosome, contacting the 23S rRNA.</text>
</comment>
<comment type="similarity">
    <text evidence="1">Belongs to the universal ribosomal protein uS15 family.</text>
</comment>
<reference key="1">
    <citation type="journal article" date="2005" name="J. Bacteriol.">
        <title>Swine and poultry pathogens: the complete genome sequences of two strains of Mycoplasma hyopneumoniae and a strain of Mycoplasma synoviae.</title>
        <authorList>
            <person name="Vasconcelos A.T.R."/>
            <person name="Ferreira H.B."/>
            <person name="Bizarro C.V."/>
            <person name="Bonatto S.L."/>
            <person name="Carvalho M.O."/>
            <person name="Pinto P.M."/>
            <person name="Almeida D.F."/>
            <person name="Almeida L.G.P."/>
            <person name="Almeida R."/>
            <person name="Alves-Junior L."/>
            <person name="Assuncao E.N."/>
            <person name="Azevedo V.A.C."/>
            <person name="Bogo M.R."/>
            <person name="Brigido M.M."/>
            <person name="Brocchi M."/>
            <person name="Burity H.A."/>
            <person name="Camargo A.A."/>
            <person name="Camargo S.S."/>
            <person name="Carepo M.S."/>
            <person name="Carraro D.M."/>
            <person name="de Mattos Cascardo J.C."/>
            <person name="Castro L.A."/>
            <person name="Cavalcanti G."/>
            <person name="Chemale G."/>
            <person name="Collevatti R.G."/>
            <person name="Cunha C.W."/>
            <person name="Dallagiovanna B."/>
            <person name="Dambros B.P."/>
            <person name="Dellagostin O.A."/>
            <person name="Falcao C."/>
            <person name="Fantinatti-Garboggini F."/>
            <person name="Felipe M.S.S."/>
            <person name="Fiorentin L."/>
            <person name="Franco G.R."/>
            <person name="Freitas N.S.A."/>
            <person name="Frias D."/>
            <person name="Grangeiro T.B."/>
            <person name="Grisard E.C."/>
            <person name="Guimaraes C.T."/>
            <person name="Hungria M."/>
            <person name="Jardim S.N."/>
            <person name="Krieger M.A."/>
            <person name="Laurino J.P."/>
            <person name="Lima L.F.A."/>
            <person name="Lopes M.I."/>
            <person name="Loreto E.L.S."/>
            <person name="Madeira H.M.F."/>
            <person name="Manfio G.P."/>
            <person name="Maranhao A.Q."/>
            <person name="Martinkovics C.T."/>
            <person name="Medeiros S.R.B."/>
            <person name="Moreira M.A.M."/>
            <person name="Neiva M."/>
            <person name="Ramalho-Neto C.E."/>
            <person name="Nicolas M.F."/>
            <person name="Oliveira S.C."/>
            <person name="Paixao R.F.C."/>
            <person name="Pedrosa F.O."/>
            <person name="Pena S.D.J."/>
            <person name="Pereira M."/>
            <person name="Pereira-Ferrari L."/>
            <person name="Piffer I."/>
            <person name="Pinto L.S."/>
            <person name="Potrich D.P."/>
            <person name="Salim A.C.M."/>
            <person name="Santos F.R."/>
            <person name="Schmitt R."/>
            <person name="Schneider M.P.C."/>
            <person name="Schrank A."/>
            <person name="Schrank I.S."/>
            <person name="Schuck A.F."/>
            <person name="Seuanez H.N."/>
            <person name="Silva D.W."/>
            <person name="Silva R."/>
            <person name="Silva S.C."/>
            <person name="Soares C.M.A."/>
            <person name="Souza K.R.L."/>
            <person name="Souza R.C."/>
            <person name="Staats C.C."/>
            <person name="Steffens M.B.R."/>
            <person name="Teixeira S.M.R."/>
            <person name="Urmenyi T.P."/>
            <person name="Vainstein M.H."/>
            <person name="Zuccherato L.W."/>
            <person name="Simpson A.J.G."/>
            <person name="Zaha A."/>
        </authorList>
    </citation>
    <scope>NUCLEOTIDE SEQUENCE [LARGE SCALE GENOMIC DNA]</scope>
    <source>
        <strain>7448</strain>
    </source>
</reference>
<dbReference type="EMBL" id="AE017244">
    <property type="protein sequence ID" value="AAZ53480.1"/>
    <property type="molecule type" value="Genomic_DNA"/>
</dbReference>
<dbReference type="RefSeq" id="WP_011206113.1">
    <property type="nucleotide sequence ID" value="NC_007332.1"/>
</dbReference>
<dbReference type="SMR" id="Q4A8Q9"/>
<dbReference type="GeneID" id="41334401"/>
<dbReference type="KEGG" id="mhp:MHP7448_0103"/>
<dbReference type="HOGENOM" id="CLU_148518_0_0_14"/>
<dbReference type="Proteomes" id="UP000000553">
    <property type="component" value="Chromosome"/>
</dbReference>
<dbReference type="GO" id="GO:0005737">
    <property type="term" value="C:cytoplasm"/>
    <property type="evidence" value="ECO:0007669"/>
    <property type="project" value="UniProtKB-ARBA"/>
</dbReference>
<dbReference type="GO" id="GO:1990904">
    <property type="term" value="C:ribonucleoprotein complex"/>
    <property type="evidence" value="ECO:0007669"/>
    <property type="project" value="UniProtKB-KW"/>
</dbReference>
<dbReference type="GO" id="GO:0005840">
    <property type="term" value="C:ribosome"/>
    <property type="evidence" value="ECO:0007669"/>
    <property type="project" value="UniProtKB-KW"/>
</dbReference>
<dbReference type="GO" id="GO:0019843">
    <property type="term" value="F:rRNA binding"/>
    <property type="evidence" value="ECO:0007669"/>
    <property type="project" value="UniProtKB-UniRule"/>
</dbReference>
<dbReference type="GO" id="GO:0003735">
    <property type="term" value="F:structural constituent of ribosome"/>
    <property type="evidence" value="ECO:0007669"/>
    <property type="project" value="InterPro"/>
</dbReference>
<dbReference type="GO" id="GO:0006412">
    <property type="term" value="P:translation"/>
    <property type="evidence" value="ECO:0007669"/>
    <property type="project" value="UniProtKB-UniRule"/>
</dbReference>
<dbReference type="CDD" id="cd00353">
    <property type="entry name" value="Ribosomal_S15p_S13e"/>
    <property type="match status" value="1"/>
</dbReference>
<dbReference type="Gene3D" id="6.10.250.3130">
    <property type="match status" value="1"/>
</dbReference>
<dbReference type="Gene3D" id="1.10.287.10">
    <property type="entry name" value="S15/NS1, RNA-binding"/>
    <property type="match status" value="1"/>
</dbReference>
<dbReference type="HAMAP" id="MF_01343_B">
    <property type="entry name" value="Ribosomal_uS15_B"/>
    <property type="match status" value="1"/>
</dbReference>
<dbReference type="InterPro" id="IPR000589">
    <property type="entry name" value="Ribosomal_uS15"/>
</dbReference>
<dbReference type="InterPro" id="IPR005290">
    <property type="entry name" value="Ribosomal_uS15_bac-type"/>
</dbReference>
<dbReference type="InterPro" id="IPR009068">
    <property type="entry name" value="uS15_NS1_RNA-bd_sf"/>
</dbReference>
<dbReference type="NCBIfam" id="TIGR00952">
    <property type="entry name" value="S15_bact"/>
    <property type="match status" value="1"/>
</dbReference>
<dbReference type="PANTHER" id="PTHR23321">
    <property type="entry name" value="RIBOSOMAL PROTEIN S15, BACTERIAL AND ORGANELLAR"/>
    <property type="match status" value="1"/>
</dbReference>
<dbReference type="PANTHER" id="PTHR23321:SF26">
    <property type="entry name" value="SMALL RIBOSOMAL SUBUNIT PROTEIN US15M"/>
    <property type="match status" value="1"/>
</dbReference>
<dbReference type="Pfam" id="PF00312">
    <property type="entry name" value="Ribosomal_S15"/>
    <property type="match status" value="1"/>
</dbReference>
<dbReference type="SMART" id="SM01387">
    <property type="entry name" value="Ribosomal_S15"/>
    <property type="match status" value="1"/>
</dbReference>
<dbReference type="SUPFAM" id="SSF47060">
    <property type="entry name" value="S15/NS1 RNA-binding domain"/>
    <property type="match status" value="1"/>
</dbReference>
<dbReference type="PROSITE" id="PS00362">
    <property type="entry name" value="RIBOSOMAL_S15"/>
    <property type="match status" value="1"/>
</dbReference>
<organism>
    <name type="scientific">Mesomycoplasma hyopneumoniae (strain 7448)</name>
    <name type="common">Mycoplasma hyopneumoniae</name>
    <dbReference type="NCBI Taxonomy" id="262722"/>
    <lineage>
        <taxon>Bacteria</taxon>
        <taxon>Bacillati</taxon>
        <taxon>Mycoplasmatota</taxon>
        <taxon>Mycoplasmoidales</taxon>
        <taxon>Metamycoplasmataceae</taxon>
        <taxon>Mesomycoplasma</taxon>
    </lineage>
</organism>